<protein>
    <recommendedName>
        <fullName>Thermosome subunit beta</fullName>
    </recommendedName>
    <alternativeName>
        <fullName>Chaperonin subunit beta</fullName>
    </alternativeName>
    <alternativeName>
        <fullName>Thermophilic factor 55 beta</fullName>
        <shortName>TF55-beta</shortName>
    </alternativeName>
    <alternativeName>
        <fullName>Thermosome subunit 2</fullName>
    </alternativeName>
</protein>
<accession>Q9V2T8</accession>
<feature type="chain" id="PRO_0000128402" description="Thermosome subunit beta">
    <location>
        <begin position="1"/>
        <end position="554"/>
    </location>
</feature>
<feature type="region of interest" description="Disordered" evidence="2">
    <location>
        <begin position="532"/>
        <end position="554"/>
    </location>
</feature>
<feature type="compositionally biased region" description="Basic and acidic residues" evidence="2">
    <location>
        <begin position="540"/>
        <end position="554"/>
    </location>
</feature>
<feature type="sequence conflict" description="In Ref. 2." evidence="3" ref="2">
    <original>I</original>
    <variation>M</variation>
    <location>
        <position position="298"/>
    </location>
</feature>
<feature type="helix" evidence="4">
    <location>
        <begin position="29"/>
        <end position="46"/>
    </location>
</feature>
<feature type="strand" evidence="4">
    <location>
        <begin position="55"/>
        <end position="60"/>
    </location>
</feature>
<feature type="turn" evidence="4">
    <location>
        <begin position="61"/>
        <end position="63"/>
    </location>
</feature>
<feature type="strand" evidence="4">
    <location>
        <begin position="64"/>
        <end position="68"/>
    </location>
</feature>
<feature type="helix" evidence="4">
    <location>
        <begin position="71"/>
        <end position="77"/>
    </location>
</feature>
<feature type="turn" evidence="4">
    <location>
        <begin position="83"/>
        <end position="85"/>
    </location>
</feature>
<feature type="helix" evidence="4">
    <location>
        <begin position="86"/>
        <end position="92"/>
    </location>
</feature>
<feature type="strand" evidence="4">
    <location>
        <begin position="95"/>
        <end position="97"/>
    </location>
</feature>
<feature type="helix" evidence="4">
    <location>
        <begin position="102"/>
        <end position="121"/>
    </location>
</feature>
<feature type="turn" evidence="4">
    <location>
        <begin position="122"/>
        <end position="124"/>
    </location>
</feature>
<feature type="helix" evidence="4">
    <location>
        <begin position="127"/>
        <end position="148"/>
    </location>
</feature>
<feature type="helix" evidence="4">
    <location>
        <begin position="157"/>
        <end position="167"/>
    </location>
</feature>
<feature type="turn" evidence="4">
    <location>
        <begin position="168"/>
        <end position="170"/>
    </location>
</feature>
<feature type="helix" evidence="4">
    <location>
        <begin position="177"/>
        <end position="191"/>
    </location>
</feature>
<feature type="strand" evidence="4">
    <location>
        <begin position="193"/>
        <end position="195"/>
    </location>
</feature>
<feature type="strand" evidence="4">
    <location>
        <begin position="198"/>
        <end position="200"/>
    </location>
</feature>
<feature type="helix" evidence="4">
    <location>
        <begin position="203"/>
        <end position="205"/>
    </location>
</feature>
<feature type="strand" evidence="4">
    <location>
        <begin position="206"/>
        <end position="211"/>
    </location>
</feature>
<feature type="strand" evidence="4">
    <location>
        <begin position="219"/>
        <end position="227"/>
    </location>
</feature>
<feature type="strand" evidence="4">
    <location>
        <begin position="234"/>
        <end position="236"/>
    </location>
</feature>
<feature type="helix" evidence="4">
    <location>
        <begin position="281"/>
        <end position="289"/>
    </location>
</feature>
<feature type="helix" evidence="4">
    <location>
        <begin position="305"/>
        <end position="313"/>
    </location>
</feature>
<feature type="strand" evidence="4">
    <location>
        <begin position="318"/>
        <end position="320"/>
    </location>
</feature>
<feature type="helix" evidence="4">
    <location>
        <begin position="324"/>
        <end position="334"/>
    </location>
</feature>
<feature type="strand" evidence="4">
    <location>
        <begin position="355"/>
        <end position="361"/>
    </location>
</feature>
<feature type="strand" evidence="4">
    <location>
        <begin position="364"/>
        <end position="370"/>
    </location>
</feature>
<feature type="strand" evidence="4">
    <location>
        <begin position="378"/>
        <end position="383"/>
    </location>
</feature>
<feature type="helix" evidence="4">
    <location>
        <begin position="387"/>
        <end position="410"/>
    </location>
</feature>
<feature type="strand" evidence="4">
    <location>
        <begin position="412"/>
        <end position="415"/>
    </location>
</feature>
<feature type="turn" evidence="4">
    <location>
        <begin position="416"/>
        <end position="418"/>
    </location>
</feature>
<feature type="helix" evidence="4">
    <location>
        <begin position="419"/>
        <end position="431"/>
    </location>
</feature>
<feature type="helix" evidence="4">
    <location>
        <begin position="432"/>
        <end position="434"/>
    </location>
</feature>
<feature type="helix" evidence="4">
    <location>
        <begin position="437"/>
        <end position="460"/>
    </location>
</feature>
<feature type="helix" evidence="4">
    <location>
        <begin position="465"/>
        <end position="475"/>
    </location>
</feature>
<feature type="helix" evidence="4">
    <location>
        <begin position="479"/>
        <end position="481"/>
    </location>
</feature>
<feature type="strand" evidence="4">
    <location>
        <begin position="484"/>
        <end position="486"/>
    </location>
</feature>
<feature type="turn" evidence="4">
    <location>
        <begin position="488"/>
        <end position="490"/>
    </location>
</feature>
<feature type="strand" evidence="4">
    <location>
        <begin position="492"/>
        <end position="495"/>
    </location>
</feature>
<feature type="turn" evidence="4">
    <location>
        <begin position="496"/>
        <end position="500"/>
    </location>
</feature>
<feature type="strand" evidence="4">
    <location>
        <begin position="502"/>
        <end position="504"/>
    </location>
</feature>
<feature type="helix" evidence="4">
    <location>
        <begin position="505"/>
        <end position="524"/>
    </location>
</feature>
<reference key="1">
    <citation type="journal article" date="2001" name="Proc. Natl. Acad. Sci. U.S.A.">
        <title>The complete genome of the crenarchaeon Sulfolobus solfataricus P2.</title>
        <authorList>
            <person name="She Q."/>
            <person name="Singh R.K."/>
            <person name="Confalonieri F."/>
            <person name="Zivanovic Y."/>
            <person name="Allard G."/>
            <person name="Awayez M.J."/>
            <person name="Chan-Weiher C.C.-Y."/>
            <person name="Clausen I.G."/>
            <person name="Curtis B.A."/>
            <person name="De Moors A."/>
            <person name="Erauso G."/>
            <person name="Fletcher C."/>
            <person name="Gordon P.M.K."/>
            <person name="Heikamp-de Jong I."/>
            <person name="Jeffries A.C."/>
            <person name="Kozera C.J."/>
            <person name="Medina N."/>
            <person name="Peng X."/>
            <person name="Thi-Ngoc H.P."/>
            <person name="Redder P."/>
            <person name="Schenk M.E."/>
            <person name="Theriault C."/>
            <person name="Tolstrup N."/>
            <person name="Charlebois R.L."/>
            <person name="Doolittle W.F."/>
            <person name="Duguet M."/>
            <person name="Gaasterland T."/>
            <person name="Garrett R.A."/>
            <person name="Ragan M.A."/>
            <person name="Sensen C.W."/>
            <person name="Van der Oost J."/>
        </authorList>
    </citation>
    <scope>NUCLEOTIDE SEQUENCE [LARGE SCALE GENOMIC DNA]</scope>
    <source>
        <strain>ATCC 35092 / DSM 1617 / JCM 11322 / P2</strain>
    </source>
</reference>
<reference key="2">
    <citation type="journal article" date="1999" name="Curr. Biol.">
        <title>Recurrent paralogy in the evolution of archaeal chaperonins.</title>
        <authorList>
            <person name="Archibald J.M."/>
            <person name="Logsdon J.M. Jr."/>
            <person name="Doolittle W.F."/>
        </authorList>
    </citation>
    <scope>NUCLEOTIDE SEQUENCE [GENOMIC DNA] OF 103-524</scope>
    <source>
        <strain>ATCC 35092 / DSM 1617 / JCM 11322 / P2</strain>
    </source>
</reference>
<evidence type="ECO:0000250" key="1"/>
<evidence type="ECO:0000256" key="2">
    <source>
        <dbReference type="SAM" id="MobiDB-lite"/>
    </source>
</evidence>
<evidence type="ECO:0000305" key="3"/>
<evidence type="ECO:0007829" key="4">
    <source>
        <dbReference type="PDB" id="4XCI"/>
    </source>
</evidence>
<sequence>MATATVATTPEGIPVIILKEGSSRTYGKEALRANIAAVKAIEEALKSTYGPRGMDKMLVDSLGDITITNDGATILDKMDLQHPTGKLLVQIAKGQDEETADGTKTAVILAGELAKKAEDLLYKEIHPTIIVSGYKKAEEIALKTIQEIAQPVTINDTDVLRKVALTSLGSKAVAGAREYLADLVVKAVAQVAELRGDKWYVDLDNVQIVKKHGGSVNDTQLVYGIVVDKEVVHPGMPKRIENAKIALLDASLEVEKPELDAEIRINDPTQMHKFLEEEENILKEKVDKIAATGANVVICQKGIDEVAQHYLAKKGILAVRRAKKSDLEKLARATGGRVISNIDELTSQDLGYAALVEERKVGEDKMVFVEGAKNPKSVSILIRGGLERVVDETERALRDALGTVADVIRDGRAVAGGGAVEIEIAKRLRKYAPQVGGKEQLAIEAYANAIEGLIMILAENAGLDPIDKLMQLRSLHENETNKWYGLNLFTGNPEDMWKLGVIEPALVKMNAVKAATEAVTLVLRIDDIVAAGKKSGSEPSGKKEKDKEEKSSED</sequence>
<gene>
    <name type="primary">thsB</name>
    <name type="ordered locus">SSO0282</name>
</gene>
<name>THSB_SACS2</name>
<comment type="function">
    <text evidence="1">Molecular chaperone; binds unfolded polypeptides in vitro, and has a weak ATPase activity.</text>
</comment>
<comment type="subunit">
    <text evidence="1">Forms a Heterooligomeric complex of two stacked eight-membered rings.</text>
</comment>
<comment type="interaction">
    <interactant intactId="EBI-16195251">
        <id>Q9V2T8</id>
    </interactant>
    <interactant intactId="EBI-16195227">
        <id>Q9V2S9</id>
        <label>thsA</label>
    </interactant>
    <organismsDiffer>false</organismsDiffer>
    <experiments>7</experiments>
</comment>
<comment type="interaction">
    <interactant intactId="EBI-16195251">
        <id>Q9V2T8</id>
    </interactant>
    <interactant intactId="EBI-16195251">
        <id>Q9V2T8</id>
        <label>thsB</label>
    </interactant>
    <organismsDiffer>false</organismsDiffer>
    <experiments>4</experiments>
</comment>
<comment type="similarity">
    <text evidence="3">Belongs to the TCP-1 chaperonin family.</text>
</comment>
<comment type="sequence caution" evidence="3">
    <conflict type="erroneous initiation">
        <sequence resource="EMBL-CDS" id="AAK40620"/>
    </conflict>
</comment>
<organism>
    <name type="scientific">Saccharolobus solfataricus (strain ATCC 35092 / DSM 1617 / JCM 11322 / P2)</name>
    <name type="common">Sulfolobus solfataricus</name>
    <dbReference type="NCBI Taxonomy" id="273057"/>
    <lineage>
        <taxon>Archaea</taxon>
        <taxon>Thermoproteota</taxon>
        <taxon>Thermoprotei</taxon>
        <taxon>Sulfolobales</taxon>
        <taxon>Sulfolobaceae</taxon>
        <taxon>Saccharolobus</taxon>
    </lineage>
</organism>
<proteinExistence type="evidence at protein level"/>
<keyword id="KW-0002">3D-structure</keyword>
<keyword id="KW-0067">ATP-binding</keyword>
<keyword id="KW-0143">Chaperone</keyword>
<keyword id="KW-0547">Nucleotide-binding</keyword>
<keyword id="KW-1185">Reference proteome</keyword>
<dbReference type="EMBL" id="AE006641">
    <property type="protein sequence ID" value="AAK40620.1"/>
    <property type="status" value="ALT_INIT"/>
    <property type="molecule type" value="Genomic_DNA"/>
</dbReference>
<dbReference type="EMBL" id="AF149920">
    <property type="protein sequence ID" value="AAF03361.1"/>
    <property type="molecule type" value="Genomic_DNA"/>
</dbReference>
<dbReference type="PIR" id="E90170">
    <property type="entry name" value="E90170"/>
</dbReference>
<dbReference type="RefSeq" id="WP_009990564.1">
    <property type="nucleotide sequence ID" value="NC_002754.1"/>
</dbReference>
<dbReference type="PDB" id="4XCD">
    <property type="method" value="X-ray"/>
    <property type="resolution" value="3.79 A"/>
    <property type="chains" value="A/B/C/D/E/F=1-554"/>
</dbReference>
<dbReference type="PDB" id="4XCG">
    <property type="method" value="X-ray"/>
    <property type="resolution" value="3.74 A"/>
    <property type="chains" value="B=1-554"/>
</dbReference>
<dbReference type="PDB" id="4XCI">
    <property type="method" value="X-ray"/>
    <property type="resolution" value="3.00 A"/>
    <property type="chains" value="B=1-554"/>
</dbReference>
<dbReference type="PDB" id="6XHI">
    <property type="method" value="EM"/>
    <property type="resolution" value="4.19 A"/>
    <property type="chains" value="A=1-554"/>
</dbReference>
<dbReference type="PDB" id="6XHJ">
    <property type="method" value="EM"/>
    <property type="resolution" value="3.62 A"/>
    <property type="chains" value="A=1-554"/>
</dbReference>
<dbReference type="PDBsum" id="4XCD"/>
<dbReference type="PDBsum" id="4XCG"/>
<dbReference type="PDBsum" id="4XCI"/>
<dbReference type="PDBsum" id="6XHI"/>
<dbReference type="PDBsum" id="6XHJ"/>
<dbReference type="EMDB" id="EMD-22186"/>
<dbReference type="EMDB" id="EMD-22187"/>
<dbReference type="SMR" id="Q9V2T8"/>
<dbReference type="DIP" id="DIP-61907N"/>
<dbReference type="FunCoup" id="Q9V2T8">
    <property type="interactions" value="269"/>
</dbReference>
<dbReference type="IntAct" id="Q9V2T8">
    <property type="interactions" value="1"/>
</dbReference>
<dbReference type="STRING" id="273057.SSO0282"/>
<dbReference type="PaxDb" id="273057-SSO0282"/>
<dbReference type="EnsemblBacteria" id="AAK40620">
    <property type="protein sequence ID" value="AAK40620"/>
    <property type="gene ID" value="SSO0282"/>
</dbReference>
<dbReference type="GeneID" id="44129253"/>
<dbReference type="KEGG" id="sso:SSO0282"/>
<dbReference type="PATRIC" id="fig|273057.12.peg.276"/>
<dbReference type="eggNOG" id="arCOG01257">
    <property type="taxonomic scope" value="Archaea"/>
</dbReference>
<dbReference type="HOGENOM" id="CLU_008891_7_3_2"/>
<dbReference type="InParanoid" id="Q9V2T8"/>
<dbReference type="PhylomeDB" id="Q9V2T8"/>
<dbReference type="EvolutionaryTrace" id="Q9V2T8"/>
<dbReference type="Proteomes" id="UP000001974">
    <property type="component" value="Chromosome"/>
</dbReference>
<dbReference type="GO" id="GO:0005524">
    <property type="term" value="F:ATP binding"/>
    <property type="evidence" value="ECO:0007669"/>
    <property type="project" value="UniProtKB-KW"/>
</dbReference>
<dbReference type="GO" id="GO:0016887">
    <property type="term" value="F:ATP hydrolysis activity"/>
    <property type="evidence" value="ECO:0007669"/>
    <property type="project" value="InterPro"/>
</dbReference>
<dbReference type="GO" id="GO:0140662">
    <property type="term" value="F:ATP-dependent protein folding chaperone"/>
    <property type="evidence" value="ECO:0007669"/>
    <property type="project" value="InterPro"/>
</dbReference>
<dbReference type="GO" id="GO:0042802">
    <property type="term" value="F:identical protein binding"/>
    <property type="evidence" value="ECO:0000353"/>
    <property type="project" value="IntAct"/>
</dbReference>
<dbReference type="GO" id="GO:0051082">
    <property type="term" value="F:unfolded protein binding"/>
    <property type="evidence" value="ECO:0000318"/>
    <property type="project" value="GO_Central"/>
</dbReference>
<dbReference type="GO" id="GO:0006457">
    <property type="term" value="P:protein folding"/>
    <property type="evidence" value="ECO:0000318"/>
    <property type="project" value="GO_Central"/>
</dbReference>
<dbReference type="CDD" id="cd03343">
    <property type="entry name" value="cpn60"/>
    <property type="match status" value="1"/>
</dbReference>
<dbReference type="FunFam" id="3.50.7.10:FF:000014">
    <property type="entry name" value="Thermosome subunit"/>
    <property type="match status" value="1"/>
</dbReference>
<dbReference type="Gene3D" id="3.50.7.10">
    <property type="entry name" value="GroEL"/>
    <property type="match status" value="1"/>
</dbReference>
<dbReference type="Gene3D" id="1.10.560.10">
    <property type="entry name" value="GroEL-like equatorial domain"/>
    <property type="match status" value="1"/>
</dbReference>
<dbReference type="Gene3D" id="3.30.260.10">
    <property type="entry name" value="TCP-1-like chaperonin intermediate domain"/>
    <property type="match status" value="1"/>
</dbReference>
<dbReference type="InterPro" id="IPR017998">
    <property type="entry name" value="Chaperone_TCP-1"/>
</dbReference>
<dbReference type="InterPro" id="IPR002194">
    <property type="entry name" value="Chaperonin_TCP-1_CS"/>
</dbReference>
<dbReference type="InterPro" id="IPR002423">
    <property type="entry name" value="Cpn60/GroEL/TCP-1"/>
</dbReference>
<dbReference type="InterPro" id="IPR027409">
    <property type="entry name" value="GroEL-like_apical_dom_sf"/>
</dbReference>
<dbReference type="InterPro" id="IPR027413">
    <property type="entry name" value="GROEL-like_equatorial_sf"/>
</dbReference>
<dbReference type="InterPro" id="IPR027410">
    <property type="entry name" value="TCP-1-like_intermed_sf"/>
</dbReference>
<dbReference type="InterPro" id="IPR053374">
    <property type="entry name" value="TCP-1_chaperonin"/>
</dbReference>
<dbReference type="InterPro" id="IPR054827">
    <property type="entry name" value="thermosome_alpha"/>
</dbReference>
<dbReference type="InterPro" id="IPR012714">
    <property type="entry name" value="Thermosome_arc"/>
</dbReference>
<dbReference type="NCBIfam" id="NF041082">
    <property type="entry name" value="thermosome_alpha"/>
    <property type="match status" value="1"/>
</dbReference>
<dbReference type="NCBIfam" id="TIGR02339">
    <property type="entry name" value="thermosome_arch"/>
    <property type="match status" value="1"/>
</dbReference>
<dbReference type="NCBIfam" id="NF041083">
    <property type="entry name" value="thermosome_beta"/>
    <property type="match status" value="1"/>
</dbReference>
<dbReference type="PANTHER" id="PTHR11353">
    <property type="entry name" value="CHAPERONIN"/>
    <property type="match status" value="1"/>
</dbReference>
<dbReference type="Pfam" id="PF00118">
    <property type="entry name" value="Cpn60_TCP1"/>
    <property type="match status" value="1"/>
</dbReference>
<dbReference type="PRINTS" id="PR00304">
    <property type="entry name" value="TCOMPLEXTCP1"/>
</dbReference>
<dbReference type="SUPFAM" id="SSF52029">
    <property type="entry name" value="GroEL apical domain-like"/>
    <property type="match status" value="1"/>
</dbReference>
<dbReference type="SUPFAM" id="SSF48592">
    <property type="entry name" value="GroEL equatorial domain-like"/>
    <property type="match status" value="1"/>
</dbReference>
<dbReference type="SUPFAM" id="SSF54849">
    <property type="entry name" value="GroEL-intermediate domain like"/>
    <property type="match status" value="1"/>
</dbReference>
<dbReference type="PROSITE" id="PS00750">
    <property type="entry name" value="TCP1_1"/>
    <property type="match status" value="1"/>
</dbReference>
<dbReference type="PROSITE" id="PS00751">
    <property type="entry name" value="TCP1_2"/>
    <property type="match status" value="1"/>
</dbReference>
<dbReference type="PROSITE" id="PS00995">
    <property type="entry name" value="TCP1_3"/>
    <property type="match status" value="1"/>
</dbReference>